<organism>
    <name type="scientific">Actinidia chinensis var. chinensis</name>
    <name type="common">Chinese soft-hair kiwi</name>
    <dbReference type="NCBI Taxonomy" id="1590841"/>
    <lineage>
        <taxon>Eukaryota</taxon>
        <taxon>Viridiplantae</taxon>
        <taxon>Streptophyta</taxon>
        <taxon>Embryophyta</taxon>
        <taxon>Tracheophyta</taxon>
        <taxon>Spermatophyta</taxon>
        <taxon>Magnoliopsida</taxon>
        <taxon>eudicotyledons</taxon>
        <taxon>Gunneridae</taxon>
        <taxon>Pentapetalae</taxon>
        <taxon>asterids</taxon>
        <taxon>Ericales</taxon>
        <taxon>Actinidiaceae</taxon>
        <taxon>Actinidia</taxon>
    </lineage>
</organism>
<comment type="function">
    <text evidence="2">Involved in the biosynthesis of volatile esters which confer kiwifruit flavor (PubMed:21450321). Alcohol acyl transferase that can use a wide range of alcohols as substrate to produce esters (PubMed:21450321). Exhibits benzoyl-CoA:alcohol O-acyltransferase activity (PubMed:21450321).</text>
</comment>
<comment type="catalytic activity">
    <reaction evidence="2">
        <text>3-(methylsulfanyl)propanoyl-CoA + butan-1-ol = butyl 3-(methylsulfanyl)propanoate + CoA</text>
        <dbReference type="Rhea" id="RHEA:64676"/>
        <dbReference type="ChEBI" id="CHEBI:28885"/>
        <dbReference type="ChEBI" id="CHEBI:57287"/>
        <dbReference type="ChEBI" id="CHEBI:82815"/>
        <dbReference type="ChEBI" id="CHEBI:156073"/>
    </reaction>
    <physiologicalReaction direction="left-to-right" evidence="2">
        <dbReference type="Rhea" id="RHEA:64677"/>
    </physiologicalReaction>
</comment>
<comment type="catalytic activity">
    <reaction evidence="2">
        <text>ethanol + benzoyl-CoA = ethyl benzoate + CoA</text>
        <dbReference type="Rhea" id="RHEA:64680"/>
        <dbReference type="ChEBI" id="CHEBI:16236"/>
        <dbReference type="ChEBI" id="CHEBI:57287"/>
        <dbReference type="ChEBI" id="CHEBI:57369"/>
        <dbReference type="ChEBI" id="CHEBI:156074"/>
    </reaction>
    <physiologicalReaction direction="left-to-right" evidence="2">
        <dbReference type="Rhea" id="RHEA:64681"/>
    </physiologicalReaction>
</comment>
<comment type="catalytic activity">
    <reaction evidence="2">
        <text>butan-1-ol + benzoyl-CoA = butyl benzoate + CoA</text>
        <dbReference type="Rhea" id="RHEA:64636"/>
        <dbReference type="ChEBI" id="CHEBI:28885"/>
        <dbReference type="ChEBI" id="CHEBI:57287"/>
        <dbReference type="ChEBI" id="CHEBI:57369"/>
        <dbReference type="ChEBI" id="CHEBI:156070"/>
    </reaction>
    <physiologicalReaction direction="left-to-right" evidence="2">
        <dbReference type="Rhea" id="RHEA:64637"/>
    </physiologicalReaction>
</comment>
<comment type="catalytic activity">
    <reaction evidence="2">
        <text>2-(methylsulfanyl)acetyl-CoA + butan-1-ol = butyl 2-(methylsulfanyl)acetate + CoA</text>
        <dbReference type="Rhea" id="RHEA:64672"/>
        <dbReference type="ChEBI" id="CHEBI:28885"/>
        <dbReference type="ChEBI" id="CHEBI:57287"/>
        <dbReference type="ChEBI" id="CHEBI:156076"/>
        <dbReference type="ChEBI" id="CHEBI:156077"/>
    </reaction>
    <physiologicalReaction direction="left-to-right" evidence="2">
        <dbReference type="Rhea" id="RHEA:64673"/>
    </physiologicalReaction>
</comment>
<comment type="tissue specificity">
    <text evidence="2">Expressed in fruit.</text>
</comment>
<comment type="developmental stage">
    <text evidence="2">Accumulates in kiwifruit during ripening.</text>
</comment>
<comment type="induction">
    <text evidence="2">Induced by ethylene in ripe fruits.</text>
</comment>
<comment type="similarity">
    <text evidence="4">Belongs to the plant acyltransferase family.</text>
</comment>
<comment type="sequence caution" evidence="4">
    <conflict type="erroneous gene model prediction">
        <sequence resource="EMBL-CDS" id="PSS01274"/>
    </conflict>
</comment>
<feature type="chain" id="PRO_0000451705" description="Alcohol acyltransferase 16">
    <location>
        <begin position="1"/>
        <end position="456"/>
    </location>
</feature>
<feature type="active site" description="Proton acceptor" evidence="1">
    <location>
        <position position="167"/>
    </location>
</feature>
<feature type="active site" description="Proton acceptor" evidence="1">
    <location>
        <position position="382"/>
    </location>
</feature>
<dbReference type="EC" id="2.3.1.-" evidence="2"/>
<dbReference type="EMBL" id="NKQK01000020">
    <property type="protein sequence ID" value="PSS01274.1"/>
    <property type="status" value="ALT_SEQ"/>
    <property type="molecule type" value="Genomic_DNA"/>
</dbReference>
<dbReference type="EMBL" id="HO772640">
    <property type="status" value="NOT_ANNOTATED_CDS"/>
    <property type="molecule type" value="mRNA"/>
</dbReference>
<dbReference type="SMR" id="A0A2R6Q326"/>
<dbReference type="STRING" id="1590841.A0A2R6Q326"/>
<dbReference type="InParanoid" id="A0A2R6Q326"/>
<dbReference type="OrthoDB" id="1483986at2759"/>
<dbReference type="Proteomes" id="UP000241394">
    <property type="component" value="Chromosome LG20"/>
</dbReference>
<dbReference type="GO" id="GO:0016746">
    <property type="term" value="F:acyltransferase activity"/>
    <property type="evidence" value="ECO:0000314"/>
    <property type="project" value="UniProtKB"/>
</dbReference>
<dbReference type="GO" id="GO:0006066">
    <property type="term" value="P:alcohol metabolic process"/>
    <property type="evidence" value="ECO:0000314"/>
    <property type="project" value="UniProtKB"/>
</dbReference>
<dbReference type="GO" id="GO:0009836">
    <property type="term" value="P:fruit ripening, climacteric"/>
    <property type="evidence" value="ECO:0000270"/>
    <property type="project" value="UniProtKB"/>
</dbReference>
<dbReference type="GO" id="GO:0009723">
    <property type="term" value="P:response to ethylene"/>
    <property type="evidence" value="ECO:0000270"/>
    <property type="project" value="UniProtKB"/>
</dbReference>
<dbReference type="Gene3D" id="3.30.559.10">
    <property type="entry name" value="Chloramphenicol acetyltransferase-like domain"/>
    <property type="match status" value="2"/>
</dbReference>
<dbReference type="InterPro" id="IPR023213">
    <property type="entry name" value="CAT-like_dom_sf"/>
</dbReference>
<dbReference type="InterPro" id="IPR050898">
    <property type="entry name" value="Plant_acyltransferase"/>
</dbReference>
<dbReference type="PANTHER" id="PTHR31147">
    <property type="entry name" value="ACYL TRANSFERASE 4"/>
    <property type="match status" value="1"/>
</dbReference>
<dbReference type="PANTHER" id="PTHR31147:SF66">
    <property type="entry name" value="OS05G0315700 PROTEIN"/>
    <property type="match status" value="1"/>
</dbReference>
<dbReference type="Pfam" id="PF02458">
    <property type="entry name" value="Transferase"/>
    <property type="match status" value="1"/>
</dbReference>
<evidence type="ECO:0000250" key="1">
    <source>
        <dbReference type="UniProtKB" id="Q9FI78"/>
    </source>
</evidence>
<evidence type="ECO:0000269" key="2">
    <source>
    </source>
</evidence>
<evidence type="ECO:0000303" key="3">
    <source ref="2"/>
</evidence>
<evidence type="ECO:0000305" key="4"/>
<evidence type="ECO:0000312" key="5">
    <source>
        <dbReference type="EMBL" id="PSS01274.1"/>
    </source>
</evidence>
<protein>
    <recommendedName>
        <fullName evidence="3">Alcohol acyltransferase 16</fullName>
        <shortName evidence="3">AcAT16</shortName>
        <ecNumber evidence="2">2.3.1.-</ecNumber>
    </recommendedName>
</protein>
<accession>A0A2R6Q326</accession>
<reference key="1">
    <citation type="journal article" date="2018" name="BMC Genomics">
        <title>A manually annotated Actinidia chinensis var. chinensis (kiwifruit) genome highlights the challenges associated with draft genomes and gene prediction in plants.</title>
        <authorList>
            <person name="Pilkington S.M."/>
            <person name="Crowhurst R."/>
            <person name="Hilario E."/>
            <person name="Nardozza S."/>
            <person name="Fraser L."/>
            <person name="Peng Y."/>
            <person name="Gunaseelan K."/>
            <person name="Simpson R."/>
            <person name="Tahir J."/>
            <person name="Deroles S.C."/>
            <person name="Templeton K."/>
            <person name="Luo Z."/>
            <person name="Davy M."/>
            <person name="Cheng C."/>
            <person name="McNeilage M."/>
            <person name="Scaglione D."/>
            <person name="Liu Y."/>
            <person name="Zhang Q."/>
            <person name="Datson P."/>
            <person name="De Silva N."/>
            <person name="Gardiner S.E."/>
            <person name="Bassett H."/>
            <person name="Chagne D."/>
            <person name="McCallum J."/>
            <person name="Dzierzon H."/>
            <person name="Deng C."/>
            <person name="Wang Y.Y."/>
            <person name="Barron L."/>
            <person name="Manako K."/>
            <person name="Bowen J."/>
            <person name="Foster T.M."/>
            <person name="Erridge Z.A."/>
            <person name="Tiffin H."/>
            <person name="Waite C.N."/>
            <person name="Davies K.M."/>
            <person name="Grierson E.P."/>
            <person name="Laing W.A."/>
            <person name="Kirk R."/>
            <person name="Chen X."/>
            <person name="Wood M."/>
            <person name="Montefiori M."/>
            <person name="Brummell D.A."/>
            <person name="Schwinn K.E."/>
            <person name="Catanach A."/>
            <person name="Fullerton C."/>
            <person name="Li D."/>
            <person name="Meiyalaghan S."/>
            <person name="Nieuwenhuizen N."/>
            <person name="Read N."/>
            <person name="Prakash R."/>
            <person name="Hunter D."/>
            <person name="Zhang H."/>
            <person name="McKenzie M."/>
            <person name="Knabel M."/>
            <person name="Harris A."/>
            <person name="Allan A.C."/>
            <person name="Gleave A."/>
            <person name="Chen A."/>
            <person name="Janssen B.J."/>
            <person name="Plunkett B."/>
            <person name="Ampomah-Dwamena C."/>
            <person name="Voogd C."/>
            <person name="Leif D."/>
            <person name="Lafferty D."/>
            <person name="Souleyre E.J.F."/>
            <person name="Varkonyi-Gasic E."/>
            <person name="Gambi F."/>
            <person name="Hanley J."/>
            <person name="Yao J.L."/>
            <person name="Cheung J."/>
            <person name="David K.M."/>
            <person name="Warren B."/>
            <person name="Marsh K."/>
            <person name="Snowden K.C."/>
            <person name="Lin-Wang K."/>
            <person name="Brian L."/>
            <person name="Martinez-Sanchez M."/>
            <person name="Wang M."/>
            <person name="Ileperuma N."/>
            <person name="Macnee N."/>
            <person name="Campin R."/>
            <person name="McAtee P."/>
            <person name="Drummond R.S.M."/>
            <person name="Espley R.V."/>
            <person name="Ireland H.S."/>
            <person name="Wu R."/>
            <person name="Atkinson R.G."/>
            <person name="Karunairetnam S."/>
            <person name="Bulley S."/>
            <person name="Chunkath S."/>
            <person name="Hanley Z."/>
            <person name="Storey R."/>
            <person name="Thrimawithana A.H."/>
            <person name="Thomson S."/>
            <person name="David C."/>
            <person name="Testolin R."/>
            <person name="Huang H."/>
            <person name="Hellens R.P."/>
            <person name="Schaffer R.J."/>
        </authorList>
    </citation>
    <scope>NUCLEOTIDE SEQUENCE [LARGE SCALE GENOMIC DNA]</scope>
    <source>
        <strain>cv. Red5</strain>
        <tissue>Leaf</tissue>
    </source>
</reference>
<reference key="2">
    <citation type="submission" date="2010-10" db="EMBL/GenBank/DDBJ databases">
        <title>Plant and food research apple EST project.</title>
        <authorList>
            <person name="Beuning L."/>
            <person name="Bowen J."/>
            <person name="Crowhurst R."/>
            <person name="Gleave A."/>
            <person name="Janssen B."/>
            <person name="McArtney S."/>
            <person name="Newcomb R."/>
            <person name="Ross G."/>
            <person name="Snowden K."/>
            <person name="Walton E."/>
            <person name="Yauk Y."/>
        </authorList>
    </citation>
    <scope>NUCLEOTIDE SEQUENCE [MRNA]</scope>
    <source>
        <tissue>Fruit</tissue>
    </source>
</reference>
<reference key="3">
    <citation type="journal article" date="2011" name="Phytochemistry">
        <title>Characterisation of two alcohol acyltransferases from kiwifruit (Actinidia spp.) reveals distinct substrate preferences.</title>
        <authorList>
            <person name="Guenther C.S."/>
            <person name="Chervin C."/>
            <person name="Marsh K.B."/>
            <person name="Newcomb R.D."/>
            <person name="Souleyre E.J.F."/>
        </authorList>
    </citation>
    <scope>FUNCTION</scope>
    <scope>CATALYTIC ACTIVITY</scope>
    <scope>DEVELOPMENTAL STAGE</scope>
    <scope>TISSUE SPECIFICITY</scope>
    <scope>INDUCTION BY ETHYLENE</scope>
</reference>
<name>AT16_ACTCC</name>
<proteinExistence type="evidence at protein level"/>
<sequence length="456" mass="51005">MASFPPSLVFTVRRNEPTLVLPSKSTPRELKQLSDIDDQEGLRFQVPVIMFYKRKLSMEGEDPVKVIREALAEALVFYYPFAGRLIEGPNRKLMVDCTSEGVLFIEADADIEVNQLIGDTIDPGFSYLDELLHDVPGSEGILGCPLLLIQVTRFRCGGWAFAIRLNHTMSDAPGLVQLLTTIAEFARGAEGAPSVPPVWQREFLAARQPPSITFQHHEYEQVINTTTDDNKSMTHKSFFFGPKEIRAIRSHFPPHYRSVSSTFDVLTACLWRCRTCALGLDPPKTVRISCAANGRGKHDLHVPRGYYGNVFAFPAVVSRAGMISTSSLEYTVEEVKKAKARMTGEYLRSVADLMVTKGRPLYTVAGNYIVSDTTRVGFDAIDFGWGKPVYGGPARAFPLISFYARFKNNRGEDGTVVLICLPEAAMKRFQDELKKMTEEHVDGPFEYKLIKVMSKL</sequence>
<gene>
    <name evidence="3" type="primary">AT16</name>
    <name evidence="5" type="ORF">CEY00_Acc22632</name>
</gene>
<keyword id="KW-0012">Acyltransferase</keyword>
<keyword id="KW-1185">Reference proteome</keyword>
<keyword id="KW-0808">Transferase</keyword>